<accession>B2JG54</accession>
<sequence length="87" mass="9909">MKEGIHPDYREVLFIDMSNDFKFVTRSTIQTRETAEFNGKTYPLAKIEVSSESHPFYTGQQKIMDTAGRVEKFNKKFGARASGKAAK</sequence>
<comment type="subunit">
    <text evidence="1">Part of the 50S ribosomal subunit.</text>
</comment>
<comment type="similarity">
    <text evidence="1">Belongs to the bacterial ribosomal protein bL31 family. Type B subfamily.</text>
</comment>
<reference key="1">
    <citation type="journal article" date="2014" name="Stand. Genomic Sci.">
        <title>Complete genome sequence of Burkholderia phymatum STM815(T), a broad host range and efficient nitrogen-fixing symbiont of Mimosa species.</title>
        <authorList>
            <person name="Moulin L."/>
            <person name="Klonowska A."/>
            <person name="Caroline B."/>
            <person name="Booth K."/>
            <person name="Vriezen J.A."/>
            <person name="Melkonian R."/>
            <person name="James E.K."/>
            <person name="Young J.P."/>
            <person name="Bena G."/>
            <person name="Hauser L."/>
            <person name="Land M."/>
            <person name="Kyrpides N."/>
            <person name="Bruce D."/>
            <person name="Chain P."/>
            <person name="Copeland A."/>
            <person name="Pitluck S."/>
            <person name="Woyke T."/>
            <person name="Lizotte-Waniewski M."/>
            <person name="Bristow J."/>
            <person name="Riley M."/>
        </authorList>
    </citation>
    <scope>NUCLEOTIDE SEQUENCE [LARGE SCALE GENOMIC DNA]</scope>
    <source>
        <strain>DSM 17167 / CIP 108236 / LMG 21445 / STM815</strain>
    </source>
</reference>
<gene>
    <name evidence="1" type="primary">rpmE2</name>
    <name type="ordered locus">Bphy_0947</name>
</gene>
<proteinExistence type="inferred from homology"/>
<organism>
    <name type="scientific">Paraburkholderia phymatum (strain DSM 17167 / CIP 108236 / LMG 21445 / STM815)</name>
    <name type="common">Burkholderia phymatum</name>
    <dbReference type="NCBI Taxonomy" id="391038"/>
    <lineage>
        <taxon>Bacteria</taxon>
        <taxon>Pseudomonadati</taxon>
        <taxon>Pseudomonadota</taxon>
        <taxon>Betaproteobacteria</taxon>
        <taxon>Burkholderiales</taxon>
        <taxon>Burkholderiaceae</taxon>
        <taxon>Paraburkholderia</taxon>
    </lineage>
</organism>
<feature type="chain" id="PRO_1000126792" description="Large ribosomal subunit protein bL31B">
    <location>
        <begin position="1"/>
        <end position="87"/>
    </location>
</feature>
<evidence type="ECO:0000255" key="1">
    <source>
        <dbReference type="HAMAP-Rule" id="MF_00502"/>
    </source>
</evidence>
<evidence type="ECO:0000305" key="2"/>
<protein>
    <recommendedName>
        <fullName evidence="1">Large ribosomal subunit protein bL31B</fullName>
    </recommendedName>
    <alternativeName>
        <fullName evidence="2">50S ribosomal protein L31 type B</fullName>
    </alternativeName>
</protein>
<name>RL31B_PARP8</name>
<keyword id="KW-1185">Reference proteome</keyword>
<keyword id="KW-0687">Ribonucleoprotein</keyword>
<keyword id="KW-0689">Ribosomal protein</keyword>
<dbReference type="EMBL" id="CP001043">
    <property type="protein sequence ID" value="ACC70136.1"/>
    <property type="molecule type" value="Genomic_DNA"/>
</dbReference>
<dbReference type="RefSeq" id="WP_012400355.1">
    <property type="nucleotide sequence ID" value="NZ_CADFGH010000007.1"/>
</dbReference>
<dbReference type="SMR" id="B2JG54"/>
<dbReference type="STRING" id="391038.Bphy_0947"/>
<dbReference type="KEGG" id="bph:Bphy_0947"/>
<dbReference type="eggNOG" id="COG0254">
    <property type="taxonomic scope" value="Bacteria"/>
</dbReference>
<dbReference type="HOGENOM" id="CLU_114306_2_1_4"/>
<dbReference type="OrthoDB" id="9803251at2"/>
<dbReference type="Proteomes" id="UP000001192">
    <property type="component" value="Chromosome 1"/>
</dbReference>
<dbReference type="GO" id="GO:1990904">
    <property type="term" value="C:ribonucleoprotein complex"/>
    <property type="evidence" value="ECO:0007669"/>
    <property type="project" value="UniProtKB-KW"/>
</dbReference>
<dbReference type="GO" id="GO:0005840">
    <property type="term" value="C:ribosome"/>
    <property type="evidence" value="ECO:0007669"/>
    <property type="project" value="UniProtKB-KW"/>
</dbReference>
<dbReference type="GO" id="GO:0003735">
    <property type="term" value="F:structural constituent of ribosome"/>
    <property type="evidence" value="ECO:0007669"/>
    <property type="project" value="InterPro"/>
</dbReference>
<dbReference type="GO" id="GO:0006412">
    <property type="term" value="P:translation"/>
    <property type="evidence" value="ECO:0007669"/>
    <property type="project" value="UniProtKB-UniRule"/>
</dbReference>
<dbReference type="Gene3D" id="4.10.830.30">
    <property type="entry name" value="Ribosomal protein L31"/>
    <property type="match status" value="1"/>
</dbReference>
<dbReference type="HAMAP" id="MF_00502">
    <property type="entry name" value="Ribosomal_bL31_2"/>
    <property type="match status" value="1"/>
</dbReference>
<dbReference type="InterPro" id="IPR034704">
    <property type="entry name" value="Ribosomal_bL28/bL31-like_sf"/>
</dbReference>
<dbReference type="InterPro" id="IPR002150">
    <property type="entry name" value="Ribosomal_bL31"/>
</dbReference>
<dbReference type="InterPro" id="IPR027493">
    <property type="entry name" value="Ribosomal_bL31_B"/>
</dbReference>
<dbReference type="InterPro" id="IPR042105">
    <property type="entry name" value="Ribosomal_bL31_sf"/>
</dbReference>
<dbReference type="NCBIfam" id="TIGR00105">
    <property type="entry name" value="L31"/>
    <property type="match status" value="1"/>
</dbReference>
<dbReference type="NCBIfam" id="NF002462">
    <property type="entry name" value="PRK01678.1"/>
    <property type="match status" value="1"/>
</dbReference>
<dbReference type="PANTHER" id="PTHR33280">
    <property type="entry name" value="50S RIBOSOMAL PROTEIN L31, CHLOROPLASTIC"/>
    <property type="match status" value="1"/>
</dbReference>
<dbReference type="PANTHER" id="PTHR33280:SF1">
    <property type="entry name" value="LARGE RIBOSOMAL SUBUNIT PROTEIN BL31C"/>
    <property type="match status" value="1"/>
</dbReference>
<dbReference type="Pfam" id="PF01197">
    <property type="entry name" value="Ribosomal_L31"/>
    <property type="match status" value="1"/>
</dbReference>
<dbReference type="PRINTS" id="PR01249">
    <property type="entry name" value="RIBOSOMALL31"/>
</dbReference>
<dbReference type="SUPFAM" id="SSF143800">
    <property type="entry name" value="L28p-like"/>
    <property type="match status" value="1"/>
</dbReference>
<dbReference type="PROSITE" id="PS01143">
    <property type="entry name" value="RIBOSOMAL_L31"/>
    <property type="match status" value="1"/>
</dbReference>